<proteinExistence type="inferred from homology"/>
<evidence type="ECO:0000255" key="1">
    <source>
        <dbReference type="HAMAP-Rule" id="MF_00122"/>
    </source>
</evidence>
<name>GATC_BURP6</name>
<protein>
    <recommendedName>
        <fullName evidence="1">Aspartyl/glutamyl-tRNA(Asn/Gln) amidotransferase subunit C</fullName>
        <shortName evidence="1">Asp/Glu-ADT subunit C</shortName>
        <ecNumber evidence="1">6.3.5.-</ecNumber>
    </recommendedName>
</protein>
<reference key="1">
    <citation type="journal article" date="2010" name="Genome Biol. Evol.">
        <title>Continuing evolution of Burkholderia mallei through genome reduction and large-scale rearrangements.</title>
        <authorList>
            <person name="Losada L."/>
            <person name="Ronning C.M."/>
            <person name="DeShazer D."/>
            <person name="Woods D."/>
            <person name="Fedorova N."/>
            <person name="Kim H.S."/>
            <person name="Shabalina S.A."/>
            <person name="Pearson T.R."/>
            <person name="Brinkac L."/>
            <person name="Tan P."/>
            <person name="Nandi T."/>
            <person name="Crabtree J."/>
            <person name="Badger J."/>
            <person name="Beckstrom-Sternberg S."/>
            <person name="Saqib M."/>
            <person name="Schutzer S.E."/>
            <person name="Keim P."/>
            <person name="Nierman W.C."/>
        </authorList>
    </citation>
    <scope>NUCLEOTIDE SEQUENCE [LARGE SCALE GENOMIC DNA]</scope>
    <source>
        <strain>668</strain>
    </source>
</reference>
<gene>
    <name evidence="1" type="primary">gatC</name>
    <name type="ordered locus">BURPS668_0171</name>
</gene>
<dbReference type="EC" id="6.3.5.-" evidence="1"/>
<dbReference type="EMBL" id="CP000570">
    <property type="protein sequence ID" value="ABN85272.1"/>
    <property type="molecule type" value="Genomic_DNA"/>
</dbReference>
<dbReference type="RefSeq" id="WP_004189769.1">
    <property type="nucleotide sequence ID" value="NC_009074.1"/>
</dbReference>
<dbReference type="SMR" id="A3N4F3"/>
<dbReference type="GeneID" id="93058695"/>
<dbReference type="KEGG" id="bpd:BURPS668_0171"/>
<dbReference type="HOGENOM" id="CLU_105899_2_2_4"/>
<dbReference type="GO" id="GO:0050566">
    <property type="term" value="F:asparaginyl-tRNA synthase (glutamine-hydrolyzing) activity"/>
    <property type="evidence" value="ECO:0007669"/>
    <property type="project" value="RHEA"/>
</dbReference>
<dbReference type="GO" id="GO:0005524">
    <property type="term" value="F:ATP binding"/>
    <property type="evidence" value="ECO:0007669"/>
    <property type="project" value="UniProtKB-KW"/>
</dbReference>
<dbReference type="GO" id="GO:0050567">
    <property type="term" value="F:glutaminyl-tRNA synthase (glutamine-hydrolyzing) activity"/>
    <property type="evidence" value="ECO:0007669"/>
    <property type="project" value="UniProtKB-UniRule"/>
</dbReference>
<dbReference type="GO" id="GO:0070681">
    <property type="term" value="P:glutaminyl-tRNAGln biosynthesis via transamidation"/>
    <property type="evidence" value="ECO:0007669"/>
    <property type="project" value="TreeGrafter"/>
</dbReference>
<dbReference type="GO" id="GO:0006450">
    <property type="term" value="P:regulation of translational fidelity"/>
    <property type="evidence" value="ECO:0007669"/>
    <property type="project" value="InterPro"/>
</dbReference>
<dbReference type="GO" id="GO:0006412">
    <property type="term" value="P:translation"/>
    <property type="evidence" value="ECO:0007669"/>
    <property type="project" value="UniProtKB-UniRule"/>
</dbReference>
<dbReference type="Gene3D" id="1.10.20.60">
    <property type="entry name" value="Glu-tRNAGln amidotransferase C subunit, N-terminal domain"/>
    <property type="match status" value="1"/>
</dbReference>
<dbReference type="HAMAP" id="MF_00122">
    <property type="entry name" value="GatC"/>
    <property type="match status" value="1"/>
</dbReference>
<dbReference type="InterPro" id="IPR036113">
    <property type="entry name" value="Asp/Glu-ADT_sf_sub_c"/>
</dbReference>
<dbReference type="InterPro" id="IPR003837">
    <property type="entry name" value="GatC"/>
</dbReference>
<dbReference type="NCBIfam" id="TIGR00135">
    <property type="entry name" value="gatC"/>
    <property type="match status" value="1"/>
</dbReference>
<dbReference type="PANTHER" id="PTHR15004">
    <property type="entry name" value="GLUTAMYL-TRNA(GLN) AMIDOTRANSFERASE SUBUNIT C, MITOCHONDRIAL"/>
    <property type="match status" value="1"/>
</dbReference>
<dbReference type="PANTHER" id="PTHR15004:SF0">
    <property type="entry name" value="GLUTAMYL-TRNA(GLN) AMIDOTRANSFERASE SUBUNIT C, MITOCHONDRIAL"/>
    <property type="match status" value="1"/>
</dbReference>
<dbReference type="Pfam" id="PF02686">
    <property type="entry name" value="GatC"/>
    <property type="match status" value="1"/>
</dbReference>
<dbReference type="SUPFAM" id="SSF141000">
    <property type="entry name" value="Glu-tRNAGln amidotransferase C subunit"/>
    <property type="match status" value="1"/>
</dbReference>
<accession>A3N4F3</accession>
<feature type="chain" id="PRO_1000016092" description="Aspartyl/glutamyl-tRNA(Asn/Gln) amidotransferase subunit C">
    <location>
        <begin position="1"/>
        <end position="99"/>
    </location>
</feature>
<comment type="function">
    <text evidence="1">Allows the formation of correctly charged Asn-tRNA(Asn) or Gln-tRNA(Gln) through the transamidation of misacylated Asp-tRNA(Asn) or Glu-tRNA(Gln) in organisms which lack either or both of asparaginyl-tRNA or glutaminyl-tRNA synthetases. The reaction takes place in the presence of glutamine and ATP through an activated phospho-Asp-tRNA(Asn) or phospho-Glu-tRNA(Gln).</text>
</comment>
<comment type="catalytic activity">
    <reaction evidence="1">
        <text>L-glutamyl-tRNA(Gln) + L-glutamine + ATP + H2O = L-glutaminyl-tRNA(Gln) + L-glutamate + ADP + phosphate + H(+)</text>
        <dbReference type="Rhea" id="RHEA:17521"/>
        <dbReference type="Rhea" id="RHEA-COMP:9681"/>
        <dbReference type="Rhea" id="RHEA-COMP:9684"/>
        <dbReference type="ChEBI" id="CHEBI:15377"/>
        <dbReference type="ChEBI" id="CHEBI:15378"/>
        <dbReference type="ChEBI" id="CHEBI:29985"/>
        <dbReference type="ChEBI" id="CHEBI:30616"/>
        <dbReference type="ChEBI" id="CHEBI:43474"/>
        <dbReference type="ChEBI" id="CHEBI:58359"/>
        <dbReference type="ChEBI" id="CHEBI:78520"/>
        <dbReference type="ChEBI" id="CHEBI:78521"/>
        <dbReference type="ChEBI" id="CHEBI:456216"/>
    </reaction>
</comment>
<comment type="catalytic activity">
    <reaction evidence="1">
        <text>L-aspartyl-tRNA(Asn) + L-glutamine + ATP + H2O = L-asparaginyl-tRNA(Asn) + L-glutamate + ADP + phosphate + 2 H(+)</text>
        <dbReference type="Rhea" id="RHEA:14513"/>
        <dbReference type="Rhea" id="RHEA-COMP:9674"/>
        <dbReference type="Rhea" id="RHEA-COMP:9677"/>
        <dbReference type="ChEBI" id="CHEBI:15377"/>
        <dbReference type="ChEBI" id="CHEBI:15378"/>
        <dbReference type="ChEBI" id="CHEBI:29985"/>
        <dbReference type="ChEBI" id="CHEBI:30616"/>
        <dbReference type="ChEBI" id="CHEBI:43474"/>
        <dbReference type="ChEBI" id="CHEBI:58359"/>
        <dbReference type="ChEBI" id="CHEBI:78515"/>
        <dbReference type="ChEBI" id="CHEBI:78516"/>
        <dbReference type="ChEBI" id="CHEBI:456216"/>
    </reaction>
</comment>
<comment type="subunit">
    <text evidence="1">Heterotrimer of A, B and C subunits.</text>
</comment>
<comment type="similarity">
    <text evidence="1">Belongs to the GatC family.</text>
</comment>
<sequence length="99" mass="11030">MALTLTDVTRIAHLARLEMADADAERTLTQLNEFFGLVEQMQAVDTTGIAPLAHPIEQILEVAQRLREDAVTEHVNRDDNQRPAPAVQDGLYLVPKVIE</sequence>
<keyword id="KW-0067">ATP-binding</keyword>
<keyword id="KW-0436">Ligase</keyword>
<keyword id="KW-0547">Nucleotide-binding</keyword>
<keyword id="KW-0648">Protein biosynthesis</keyword>
<organism>
    <name type="scientific">Burkholderia pseudomallei (strain 668)</name>
    <dbReference type="NCBI Taxonomy" id="320373"/>
    <lineage>
        <taxon>Bacteria</taxon>
        <taxon>Pseudomonadati</taxon>
        <taxon>Pseudomonadota</taxon>
        <taxon>Betaproteobacteria</taxon>
        <taxon>Burkholderiales</taxon>
        <taxon>Burkholderiaceae</taxon>
        <taxon>Burkholderia</taxon>
        <taxon>pseudomallei group</taxon>
    </lineage>
</organism>